<name>VP22_PSHV1</name>
<gene>
    <name type="primary">UL49</name>
</gene>
<proteinExistence type="inferred from homology"/>
<keyword id="KW-1035">Host cytoplasm</keyword>
<keyword id="KW-1040">Host Golgi apparatus</keyword>
<keyword id="KW-1048">Host nucleus</keyword>
<keyword id="KW-0597">Phosphoprotein</keyword>
<keyword id="KW-1185">Reference proteome</keyword>
<keyword id="KW-0946">Virion</keyword>
<keyword id="KW-0920">Virion tegument</keyword>
<protein>
    <recommendedName>
        <fullName>Tegument protein VP22</fullName>
    </recommendedName>
</protein>
<comment type="function">
    <text evidence="1">Tegument protein that plays different roles during the time course of infection (By similarity). Participates in both the accumulation of viral mRNAs and viral protein translation at late time of infection (By similarity). Modulates the RNase activity of the virion host shutoff protein UL41 probably to ensure necessary levels of key cellular mRNAs and proteins (By similarity). Plays a role in microtubule reorganization that occurs after viral infection by stabilizing microtubule network (By similarity). Plays a role in the inhibition of host innate immune system by targeting the CGAS enzymatic activity which is the principal cytosolic DNA sensor that detects invading viral DNA. Acts by mediating disruption of liquid-like droplets in which CGAS is activated, thereby preventing CGAS activity (By similarity).</text>
</comment>
<comment type="subunit">
    <text evidence="1">Interacts with gE (via C-terminus); this interaction is necessary for the recruitment of VP22 to the Golgi and its packaging into virions (By similarity). Interacts with gM (via C-terminus) (By similarity). Interacts with VP16; this interaction allows the formation of a tripartite complex composed of VP16, VP22 and UL41/VHS (By similarity). Interacts with the capsid-binding protein UL16 (By similarity). Interacts with host CGAS (By similarity).</text>
</comment>
<comment type="subcellular location">
    <subcellularLocation>
        <location evidence="1">Virion tegument</location>
    </subcellularLocation>
    <subcellularLocation>
        <location evidence="1">Host cytoplasm</location>
    </subcellularLocation>
    <subcellularLocation>
        <location evidence="1">Host nucleus</location>
    </subcellularLocation>
    <subcellularLocation>
        <location evidence="1">Host Golgi apparatus</location>
    </subcellularLocation>
    <text evidence="1">One of the most abundant tegument protein (about 2000 copies per virion). Localizes in the cytoplasm at 8 hours postinfection and in the nucleus at 16 hours postinfection. During virion morphogenesis, this protein probably accumulates at the trans-Golgi where secondary envelopment occurs.</text>
</comment>
<comment type="PTM">
    <text evidence="1">Highly phosphorylated in the host cell. Packaging is selective for underphosphorylated forms.</text>
</comment>
<comment type="similarity">
    <text evidence="3">Belongs to the alphaherpesvirinae VP22 tegument protein family.</text>
</comment>
<organismHost>
    <name type="scientific">Amazona oratrix</name>
    <name type="common">yellow-headed parrot</name>
    <dbReference type="NCBI Taxonomy" id="152276"/>
</organismHost>
<feature type="chain" id="PRO_0000406825" description="Tegument protein VP22">
    <location>
        <begin position="1"/>
        <end position="284"/>
    </location>
</feature>
<feature type="region of interest" description="Disordered" evidence="2">
    <location>
        <begin position="1"/>
        <end position="126"/>
    </location>
</feature>
<feature type="region of interest" description="Disordered" evidence="2">
    <location>
        <begin position="239"/>
        <end position="284"/>
    </location>
</feature>
<feature type="compositionally biased region" description="Basic and acidic residues" evidence="2">
    <location>
        <begin position="74"/>
        <end position="83"/>
    </location>
</feature>
<feature type="compositionally biased region" description="Basic residues" evidence="2">
    <location>
        <begin position="94"/>
        <end position="108"/>
    </location>
</feature>
<feature type="compositionally biased region" description="Polar residues" evidence="2">
    <location>
        <begin position="115"/>
        <end position="126"/>
    </location>
</feature>
<organism>
    <name type="scientific">Psittacid herpesvirus 1 (isolate Amazon parrot/-/97-0001/1997)</name>
    <name type="common">PsHV-1</name>
    <name type="synonym">Pacheco's disease virus</name>
    <dbReference type="NCBI Taxonomy" id="670426"/>
    <lineage>
        <taxon>Viruses</taxon>
        <taxon>Duplodnaviria</taxon>
        <taxon>Heunggongvirae</taxon>
        <taxon>Peploviricota</taxon>
        <taxon>Herviviricetes</taxon>
        <taxon>Herpesvirales</taxon>
        <taxon>Orthoherpesviridae</taxon>
        <taxon>Alphaherpesvirinae</taxon>
        <taxon>Iltovirus</taxon>
        <taxon>Iltovirus psittacidalpha1</taxon>
        <taxon>Psittacid alphaherpesvirus 1</taxon>
    </lineage>
</organism>
<sequence>MSYYTNEQSGGEKKTRKSSSSKRSDRKDSASSSPPPPGAVRGRVMYPPGYDGDAWLSRRERRESSGSSDSSSSSRDDDDRRQPEQQPKAQSTRERRKSQTTVTTRRKTDRGDGGKSSNSNGPWSIDNQCANLVKRLSLAKGFGPSATPASDSDRWRTTTNPANRSAFVQAVSVTAMAQGELAARAAWEKYKPRNNEDLEKLVETLEIKITVNPGRGLWDVASNIASAIRNGQPITHDLLYASSPAGDGARTSRRQSCRSKSMPRGDEEDERDAGSPRPPSSRRR</sequence>
<dbReference type="EMBL" id="AY372243">
    <property type="protein sequence ID" value="AAQ73692.1"/>
    <property type="molecule type" value="Genomic_DNA"/>
</dbReference>
<dbReference type="RefSeq" id="NP_944386.1">
    <property type="nucleotide sequence ID" value="NC_005264.1"/>
</dbReference>
<dbReference type="GeneID" id="2656966"/>
<dbReference type="KEGG" id="vg:2656966"/>
<dbReference type="Proteomes" id="UP000006840">
    <property type="component" value="Segment"/>
</dbReference>
<dbReference type="GO" id="GO:0044177">
    <property type="term" value="C:host cell Golgi apparatus"/>
    <property type="evidence" value="ECO:0007669"/>
    <property type="project" value="UniProtKB-SubCell"/>
</dbReference>
<dbReference type="GO" id="GO:0042025">
    <property type="term" value="C:host cell nucleus"/>
    <property type="evidence" value="ECO:0007669"/>
    <property type="project" value="UniProtKB-SubCell"/>
</dbReference>
<dbReference type="GO" id="GO:0019033">
    <property type="term" value="C:viral tegument"/>
    <property type="evidence" value="ECO:0007669"/>
    <property type="project" value="UniProtKB-SubCell"/>
</dbReference>
<dbReference type="InterPro" id="IPR006908">
    <property type="entry name" value="Herpes_UL49"/>
</dbReference>
<dbReference type="Pfam" id="PF04823">
    <property type="entry name" value="Herpes_UL49_2"/>
    <property type="match status" value="1"/>
</dbReference>
<evidence type="ECO:0000250" key="1">
    <source>
        <dbReference type="UniProtKB" id="P10233"/>
    </source>
</evidence>
<evidence type="ECO:0000256" key="2">
    <source>
        <dbReference type="SAM" id="MobiDB-lite"/>
    </source>
</evidence>
<evidence type="ECO:0000305" key="3"/>
<accession>Q6UDL8</accession>
<reference key="1">
    <citation type="journal article" date="2006" name="J. Virol.">
        <title>Psittacid herpesvirus 1 and infectious laryngotracheitis virus: Comparative genome sequence analysis of two avian alphaherpesviruses.</title>
        <authorList>
            <person name="Thureen D.R."/>
            <person name="Keeler C.L. Jr."/>
        </authorList>
    </citation>
    <scope>NUCLEOTIDE SEQUENCE [LARGE SCALE GENOMIC DNA]</scope>
</reference>